<protein>
    <recommendedName>
        <fullName>Gametogenetin</fullName>
    </recommendedName>
</protein>
<organism>
    <name type="scientific">Mus musculus</name>
    <name type="common">Mouse</name>
    <dbReference type="NCBI Taxonomy" id="10090"/>
    <lineage>
        <taxon>Eukaryota</taxon>
        <taxon>Metazoa</taxon>
        <taxon>Chordata</taxon>
        <taxon>Craniata</taxon>
        <taxon>Vertebrata</taxon>
        <taxon>Euteleostomi</taxon>
        <taxon>Mammalia</taxon>
        <taxon>Eutheria</taxon>
        <taxon>Euarchontoglires</taxon>
        <taxon>Glires</taxon>
        <taxon>Rodentia</taxon>
        <taxon>Myomorpha</taxon>
        <taxon>Muroidea</taxon>
        <taxon>Muridae</taxon>
        <taxon>Murinae</taxon>
        <taxon>Mus</taxon>
        <taxon>Mus</taxon>
    </lineage>
</organism>
<evidence type="ECO:0000250" key="1">
    <source>
        <dbReference type="UniProtKB" id="Q66HC8"/>
    </source>
</evidence>
<evidence type="ECO:0000256" key="2">
    <source>
        <dbReference type="SAM" id="MobiDB-lite"/>
    </source>
</evidence>
<evidence type="ECO:0000269" key="3">
    <source>
    </source>
</evidence>
<evidence type="ECO:0000269" key="4">
    <source>
    </source>
</evidence>
<evidence type="ECO:0000269" key="5">
    <source>
    </source>
</evidence>
<evidence type="ECO:0000303" key="6">
    <source>
    </source>
</evidence>
<evidence type="ECO:0000305" key="7"/>
<keyword id="KW-0025">Alternative splicing</keyword>
<keyword id="KW-0963">Cytoplasm</keyword>
<keyword id="KW-0968">Cytoplasmic vesicle</keyword>
<keyword id="KW-0217">Developmental protein</keyword>
<keyword id="KW-0221">Differentiation</keyword>
<keyword id="KW-0539">Nucleus</keyword>
<keyword id="KW-0597">Phosphoprotein</keyword>
<keyword id="KW-1185">Reference proteome</keyword>
<keyword id="KW-0744">Spermatogenesis</keyword>
<sequence>MGNVQSEPSAGGGSRKEQASDRASDSRRTPLVEPEVTPSSPAMRLARGLGVWFPGSSGPPGLLIPPEPQASSSPLPLTLELPSPVTPPPEEAAAVSTPPPPPVGTLLPAPSKWRKPTGTSVPRIRGLLEASHRGQGDPPSLRPLPPLPRQLTEKDPVLRAPAPPPTPLEPRKQLPPAPSTCDPQPLSRRITLASSATSPTESQVRHSSEGQAAGGAHGGVPPQAGEGEMARSATSESGLSLLCKVTFKSGPHLSPTSASGPLAAKASPGAGGGGLFASSGAISYAEVLKQGPQPPGATRPLGEVPPGATRPLGEVPRAAQETEGGDGDGEGCSGPPSVPAPLARALPPPPYTTFPGSKPKFDWVSPPDGTERHFRFNGAVGGIGAPRRRTTTLSGPWGSPPPRSGQTHPSSGPRRPTPALLAPPMFIFPAPNNGEPVRPVPPSPQQIPPLPPPPPTPPATPPPAPPPTPQPPALPRTPILVARPPTPGPGHLESALAPTPPSTLSPTAAADQVPAATPATVTSQVPATATAELSPPMPQPKTRTRRNKGPRAARGVIREEGTSGDGPREPNTAPVTDSSSGGGGGGSNGTSTAGASNKGTARHWPPFEVLNSCPCKCYCRHQRRHRRLPRNVSAWLSTPTNHLSEPPWVATVKLAGSLVAGLEHYDLQATHST</sequence>
<comment type="function">
    <text evidence="3">May be involved in spermatogenesis.</text>
</comment>
<comment type="subunit">
    <text evidence="3 4 5">Isoform 1 and isoform 3 interact with FANCL. Isoform 1 interacts with GGNBP1, ZNF403/GGNBP2 and OAZ3. Isoform 2 interacts with GGNBP1.</text>
</comment>
<comment type="interaction">
    <interactant intactId="EBI-3890505">
        <id>Q80WJ1</id>
    </interactant>
    <interactant intactId="EBI-4370069">
        <id>Q5SV77</id>
        <label>Ggnbp2</label>
    </interactant>
    <organismsDiffer>false</organismsDiffer>
    <experiments>3</experiments>
</comment>
<comment type="subcellular location">
    <molecule>Isoform 1</molecule>
    <subcellularLocation>
        <location>Cytoplasm</location>
        <location>Perinuclear region</location>
    </subcellularLocation>
    <text>Localizes along the nuclear membrane.</text>
</comment>
<comment type="subcellular location">
    <molecule>Isoform 2</molecule>
    <subcellularLocation>
        <location>Cytoplasmic vesicle</location>
    </subcellularLocation>
</comment>
<comment type="subcellular location">
    <molecule>Isoform 3</molecule>
    <subcellularLocation>
        <location>Nucleus</location>
        <location>Nucleolus</location>
    </subcellularLocation>
</comment>
<comment type="alternative products">
    <event type="alternative splicing"/>
    <isoform>
        <id>Q80WJ1-1</id>
        <name>1</name>
        <name>GGN1</name>
        <sequence type="displayed"/>
    </isoform>
    <isoform>
        <id>Q80WJ1-2</id>
        <name>2</name>
        <name>GGN2</name>
        <sequence type="described" ref="VSP_019172 VSP_019173"/>
    </isoform>
    <isoform>
        <id>Q80WJ1-3</id>
        <name>3</name>
        <name>GGN3</name>
        <sequence type="described" ref="VSP_019171"/>
    </isoform>
</comment>
<comment type="tissue specificity">
    <text evidence="3">Testis-specific. Specifically expressed in the germ cells and not in the somatic, Sertoli, or Leydig cells. In adult testis, expression starts in stage VIII pachytene spermatocytes, increases in stage IX and X pachytene spermatocytes, and culminates in stage XI diplotene spermatocytes and the meiotic cells in stage XII. Expression decreases slightly in step 1-3 spermatids, further decreases in step 4-11 spermatids, and is no longer detectable in step 12 spermatids and beyond. Isoform 2 is mainly expressed in testis.</text>
</comment>
<comment type="developmental stage">
    <text evidence="3 5">Isoform 2 is detected at high level in adult testis and at lower level in 19-day testis. Not detected in 14-day testis (at protein level). In the developing postnatal gonad, it is not expressed in 6-day-old testes in which the germ cells are almost exclusively spermatogonia or 14-day testis in which the most advanced germ cells are early pachytene spermatocytes. However, it is expressed in 21-day testis tubules containing late pachytene spermatocytes or spermatids. In the postnatal male testis, it is strictly confined to late pachytene spermatocytes through spermatids, a time during which meiosis takes place.</text>
</comment>
<gene>
    <name type="primary">Ggn</name>
</gene>
<dbReference type="EMBL" id="AF538032">
    <property type="protein sequence ID" value="AAP31497.1"/>
    <property type="molecule type" value="mRNA"/>
</dbReference>
<dbReference type="EMBL" id="AF538033">
    <property type="protein sequence ID" value="AAP31498.1"/>
    <property type="molecule type" value="mRNA"/>
</dbReference>
<dbReference type="EMBL" id="AF538034">
    <property type="protein sequence ID" value="AAP31499.1"/>
    <property type="molecule type" value="mRNA"/>
</dbReference>
<dbReference type="EMBL" id="BC089358">
    <property type="protein sequence ID" value="AAH89358.1"/>
    <property type="molecule type" value="mRNA"/>
</dbReference>
<dbReference type="CCDS" id="CCDS21067.1">
    <molecule id="Q80WJ1-3"/>
</dbReference>
<dbReference type="CCDS" id="CCDS90196.1">
    <molecule id="Q80WJ1-1"/>
</dbReference>
<dbReference type="RefSeq" id="NP_001345781.1">
    <molecule id="Q80WJ1-1"/>
    <property type="nucleotide sequence ID" value="NM_001358852.1"/>
</dbReference>
<dbReference type="RefSeq" id="NP_874353.2">
    <property type="nucleotide sequence ID" value="NM_182694.2"/>
</dbReference>
<dbReference type="RefSeq" id="NP_874355.1">
    <molecule id="Q80WJ1-3"/>
    <property type="nucleotide sequence ID" value="NM_182696.3"/>
</dbReference>
<dbReference type="RefSeq" id="XP_006540008.1">
    <property type="nucleotide sequence ID" value="XM_006539945.3"/>
</dbReference>
<dbReference type="BioGRID" id="232577">
    <property type="interactions" value="5"/>
</dbReference>
<dbReference type="FunCoup" id="Q80WJ1">
    <property type="interactions" value="59"/>
</dbReference>
<dbReference type="IntAct" id="Q80WJ1">
    <property type="interactions" value="3"/>
</dbReference>
<dbReference type="MINT" id="Q80WJ1"/>
<dbReference type="STRING" id="10090.ENSMUSP00000096209"/>
<dbReference type="GlyGen" id="Q80WJ1">
    <property type="glycosylation" value="10 sites"/>
</dbReference>
<dbReference type="iPTMnet" id="Q80WJ1"/>
<dbReference type="PhosphoSitePlus" id="Q80WJ1"/>
<dbReference type="jPOST" id="Q80WJ1"/>
<dbReference type="PaxDb" id="10090-ENSMUSP00000096209"/>
<dbReference type="ProteomicsDB" id="267440">
    <molecule id="Q80WJ1-1"/>
</dbReference>
<dbReference type="ProteomicsDB" id="267441">
    <molecule id="Q80WJ1-2"/>
</dbReference>
<dbReference type="ProteomicsDB" id="267442">
    <molecule id="Q80WJ1-3"/>
</dbReference>
<dbReference type="Antibodypedia" id="30056">
    <property type="antibodies" value="66 antibodies from 17 providers"/>
</dbReference>
<dbReference type="Ensembl" id="ENSMUST00000033886.8">
    <molecule id="Q80WJ1-3"/>
    <property type="protein sequence ID" value="ENSMUSP00000033886.8"/>
    <property type="gene ID" value="ENSMUSG00000031493.11"/>
</dbReference>
<dbReference type="Ensembl" id="ENSMUST00000209019.2">
    <molecule id="Q80WJ1-1"/>
    <property type="protein sequence ID" value="ENSMUSP00000146750.2"/>
    <property type="gene ID" value="ENSMUSG00000031493.11"/>
</dbReference>
<dbReference type="GeneID" id="243897"/>
<dbReference type="KEGG" id="mmu:243897"/>
<dbReference type="UCSC" id="uc009gaz.1">
    <molecule id="Q80WJ1-3"/>
    <property type="organism name" value="mouse"/>
</dbReference>
<dbReference type="AGR" id="MGI:2181461"/>
<dbReference type="CTD" id="199720"/>
<dbReference type="MGI" id="MGI:2181461">
    <property type="gene designation" value="Ggn"/>
</dbReference>
<dbReference type="VEuPathDB" id="HostDB:ENSMUSG00000031493"/>
<dbReference type="eggNOG" id="ENOG502ST22">
    <property type="taxonomic scope" value="Eukaryota"/>
</dbReference>
<dbReference type="GeneTree" id="ENSGT00700000104635"/>
<dbReference type="HOGENOM" id="CLU_1864469_0_0_1"/>
<dbReference type="InParanoid" id="Q80WJ1"/>
<dbReference type="OMA" id="PPGQMHS"/>
<dbReference type="OrthoDB" id="9424365at2759"/>
<dbReference type="PhylomeDB" id="Q80WJ1"/>
<dbReference type="BioGRID-ORCS" id="243897">
    <property type="hits" value="2 hits in 112 CRISPR screens"/>
</dbReference>
<dbReference type="PRO" id="PR:Q80WJ1"/>
<dbReference type="Proteomes" id="UP000000589">
    <property type="component" value="Chromosome 7"/>
</dbReference>
<dbReference type="RNAct" id="Q80WJ1">
    <property type="molecule type" value="protein"/>
</dbReference>
<dbReference type="Bgee" id="ENSMUSG00000031493">
    <property type="expression patterns" value="Expressed in testis and 56 other cell types or tissues"/>
</dbReference>
<dbReference type="ExpressionAtlas" id="Q80WJ1">
    <property type="expression patterns" value="baseline and differential"/>
</dbReference>
<dbReference type="GO" id="GO:0005737">
    <property type="term" value="C:cytoplasm"/>
    <property type="evidence" value="ECO:0000314"/>
    <property type="project" value="MGI"/>
</dbReference>
<dbReference type="GO" id="GO:0031410">
    <property type="term" value="C:cytoplasmic vesicle"/>
    <property type="evidence" value="ECO:0007669"/>
    <property type="project" value="UniProtKB-KW"/>
</dbReference>
<dbReference type="GO" id="GO:0016020">
    <property type="term" value="C:membrane"/>
    <property type="evidence" value="ECO:0000303"/>
    <property type="project" value="UniProtKB"/>
</dbReference>
<dbReference type="GO" id="GO:0005635">
    <property type="term" value="C:nuclear envelope"/>
    <property type="evidence" value="ECO:0000303"/>
    <property type="project" value="UniProtKB"/>
</dbReference>
<dbReference type="GO" id="GO:0005730">
    <property type="term" value="C:nucleolus"/>
    <property type="evidence" value="ECO:0000314"/>
    <property type="project" value="MGI"/>
</dbReference>
<dbReference type="GO" id="GO:0048471">
    <property type="term" value="C:perinuclear region of cytoplasm"/>
    <property type="evidence" value="ECO:0000314"/>
    <property type="project" value="MGI"/>
</dbReference>
<dbReference type="GO" id="GO:0042802">
    <property type="term" value="F:identical protein binding"/>
    <property type="evidence" value="ECO:0000353"/>
    <property type="project" value="MGI"/>
</dbReference>
<dbReference type="GO" id="GO:0031625">
    <property type="term" value="F:ubiquitin protein ligase binding"/>
    <property type="evidence" value="ECO:0000353"/>
    <property type="project" value="MGI"/>
</dbReference>
<dbReference type="GO" id="GO:0030154">
    <property type="term" value="P:cell differentiation"/>
    <property type="evidence" value="ECO:0007669"/>
    <property type="project" value="UniProtKB-KW"/>
</dbReference>
<dbReference type="GO" id="GO:0006302">
    <property type="term" value="P:double-strand break repair"/>
    <property type="evidence" value="ECO:0000315"/>
    <property type="project" value="MGI"/>
</dbReference>
<dbReference type="GO" id="GO:0007566">
    <property type="term" value="P:embryo implantation"/>
    <property type="evidence" value="ECO:0000315"/>
    <property type="project" value="MGI"/>
</dbReference>
<dbReference type="GO" id="GO:0007276">
    <property type="term" value="P:gamete generation"/>
    <property type="evidence" value="ECO:0000270"/>
    <property type="project" value="UniProtKB"/>
</dbReference>
<dbReference type="GO" id="GO:0008104">
    <property type="term" value="P:protein localization"/>
    <property type="evidence" value="ECO:0000314"/>
    <property type="project" value="MGI"/>
</dbReference>
<dbReference type="GO" id="GO:0065003">
    <property type="term" value="P:protein-containing complex assembly"/>
    <property type="evidence" value="ECO:0000303"/>
    <property type="project" value="UniProtKB"/>
</dbReference>
<dbReference type="GO" id="GO:0007283">
    <property type="term" value="P:spermatogenesis"/>
    <property type="evidence" value="ECO:0007669"/>
    <property type="project" value="UniProtKB-KW"/>
</dbReference>
<dbReference type="InterPro" id="IPR031400">
    <property type="entry name" value="GGN"/>
</dbReference>
<dbReference type="PANTHER" id="PTHR47742">
    <property type="entry name" value="GAMETOGENETIN"/>
    <property type="match status" value="1"/>
</dbReference>
<dbReference type="PANTHER" id="PTHR47742:SF1">
    <property type="entry name" value="GAMETOGENETIN"/>
    <property type="match status" value="1"/>
</dbReference>
<dbReference type="Pfam" id="PF15685">
    <property type="entry name" value="GGN"/>
    <property type="match status" value="2"/>
</dbReference>
<name>GGN_MOUSE</name>
<reference key="1">
    <citation type="journal article" date="2003" name="J. Biol. Chem.">
        <title>Mouse GGN1 and GGN3, two germ cell-specific proteins from the single gene Ggn, interact with mouse POG and play a role in spermatogenesis.</title>
        <authorList>
            <person name="Lu B."/>
            <person name="Bishop C.E."/>
        </authorList>
    </citation>
    <scope>NUCLEOTIDE SEQUENCE [MRNA] (ISOFORMS 1; 2 AND 3)</scope>
    <scope>FUNCTION</scope>
    <scope>SUBCELLULAR LOCATION</scope>
    <scope>TISSUE SPECIFICITY</scope>
    <scope>DEVELOPMENTAL STAGE</scope>
    <scope>INTERACTION WITH FANCL</scope>
    <source>
        <strain>BALB/cJ</strain>
        <tissue>Testis</tissue>
    </source>
</reference>
<reference key="2">
    <citation type="journal article" date="2004" name="Genome Res.">
        <title>The status, quality, and expansion of the NIH full-length cDNA project: the Mammalian Gene Collection (MGC).</title>
        <authorList>
            <consortium name="The MGC Project Team"/>
        </authorList>
    </citation>
    <scope>NUCLEOTIDE SEQUENCE [LARGE SCALE MRNA] (ISOFORM 1)</scope>
    <source>
        <strain>C57BL/6J</strain>
        <tissue>Eye</tissue>
    </source>
</reference>
<reference key="3">
    <citation type="journal article" date="2005" name="FEBS Lett.">
        <title>Yeast two-hybrid screens imply that GGNBP1, GGNBP2 and OAZ3 are potential interaction partners of testicular germ cell-specific protein GGN1.</title>
        <authorList>
            <person name="Zhang J."/>
            <person name="Wang Y."/>
            <person name="Zhou Y."/>
            <person name="Cao Z."/>
            <person name="Huang P."/>
            <person name="Lu B."/>
        </authorList>
    </citation>
    <scope>INTERACTION WITH GGNBP1; ZNF403 AND OAZ3</scope>
</reference>
<reference key="4">
    <citation type="journal article" date="2005" name="Mol. Reprod. Dev.">
        <title>Germ-cell specific protein gametogenetin protein 2 (GGN2), expression in the testis, and association with intracellular membrane.</title>
        <authorList>
            <person name="Zhao Q."/>
            <person name="Zhou Y."/>
            <person name="Cao Z."/>
            <person name="Zhu H."/>
            <person name="Huang P."/>
            <person name="Lu B."/>
        </authorList>
    </citation>
    <scope>INTERACTION WITH GGNBP1</scope>
    <scope>SUBCELLULAR LOCATION</scope>
    <scope>DEVELOPMENTAL STAGE</scope>
</reference>
<proteinExistence type="evidence at protein level"/>
<feature type="chain" id="PRO_0000239343" description="Gametogenetin">
    <location>
        <begin position="1"/>
        <end position="673"/>
    </location>
</feature>
<feature type="region of interest" description="Disordered" evidence="2">
    <location>
        <begin position="1"/>
        <end position="599"/>
    </location>
</feature>
<feature type="region of interest" description="Interaction with GGNBP1">
    <location>
        <begin position="125"/>
        <end position="506"/>
    </location>
</feature>
<feature type="region of interest" description="Interactions with ZNF403/GGNBP2 and OAZ3">
    <location>
        <begin position="511"/>
        <end position="673"/>
    </location>
</feature>
<feature type="compositionally biased region" description="Basic and acidic residues" evidence="2">
    <location>
        <begin position="14"/>
        <end position="30"/>
    </location>
</feature>
<feature type="compositionally biased region" description="Low complexity" evidence="2">
    <location>
        <begin position="70"/>
        <end position="83"/>
    </location>
</feature>
<feature type="compositionally biased region" description="Pro residues" evidence="2">
    <location>
        <begin position="161"/>
        <end position="178"/>
    </location>
</feature>
<feature type="compositionally biased region" description="Polar residues" evidence="2">
    <location>
        <begin position="192"/>
        <end position="202"/>
    </location>
</feature>
<feature type="compositionally biased region" description="Low complexity" evidence="2">
    <location>
        <begin position="257"/>
        <end position="268"/>
    </location>
</feature>
<feature type="compositionally biased region" description="Low complexity" evidence="2">
    <location>
        <begin position="413"/>
        <end position="424"/>
    </location>
</feature>
<feature type="compositionally biased region" description="Pro residues" evidence="2">
    <location>
        <begin position="438"/>
        <end position="475"/>
    </location>
</feature>
<feature type="compositionally biased region" description="Low complexity" evidence="2">
    <location>
        <begin position="504"/>
        <end position="531"/>
    </location>
</feature>
<feature type="compositionally biased region" description="Basic residues" evidence="2">
    <location>
        <begin position="542"/>
        <end position="551"/>
    </location>
</feature>
<feature type="modified residue" description="Phosphoserine" evidence="1">
    <location>
        <position position="399"/>
    </location>
</feature>
<feature type="splice variant" id="VSP_019171" description="In isoform 3." evidence="6">
    <location>
        <begin position="1"/>
        <end position="536"/>
    </location>
</feature>
<feature type="splice variant" id="VSP_019172" description="In isoform 2." evidence="6">
    <original>VRHSSEGQAAGGAHGGVPPQAGEGEMARSATSESGLSLLCKVTFKSGPHLSPTSASGPLAAKASPG</original>
    <variation>LPTRSQLQLQPQSHPKFQQPPPLSCHRQCPNPRLVHAGTKVPERPGVLSVKKGLLETALENRIRLR</variation>
    <location>
        <begin position="204"/>
        <end position="269"/>
    </location>
</feature>
<feature type="splice variant" id="VSP_019173" description="In isoform 2." evidence="6">
    <location>
        <begin position="270"/>
        <end position="673"/>
    </location>
</feature>
<feature type="sequence conflict" description="In Ref. 1; AAP31497/AAP31498." evidence="7" ref="1">
    <original>P</original>
    <variation>S</variation>
    <location>
        <position position="87"/>
    </location>
</feature>
<feature type="sequence conflict" description="In Ref. 1; AAP31497/AAP31498." evidence="7" ref="1">
    <original>E</original>
    <variation>EAA</variation>
    <location>
        <position position="91"/>
    </location>
</feature>
<accession>Q80WJ1</accession>
<accession>Q5EBP4</accession>
<accession>Q80WI9</accession>
<accession>Q80WJ0</accession>